<dbReference type="EC" id="4.1.1.65" evidence="1"/>
<dbReference type="EMBL" id="CP001056">
    <property type="protein sequence ID" value="ACD22074.1"/>
    <property type="molecule type" value="Genomic_DNA"/>
</dbReference>
<dbReference type="SMR" id="B2THF2"/>
<dbReference type="KEGG" id="cbk:CLL_A0050"/>
<dbReference type="PATRIC" id="fig|935198.13.peg.41"/>
<dbReference type="HOGENOM" id="CLU_029061_2_2_9"/>
<dbReference type="UniPathway" id="UPA00558">
    <property type="reaction ID" value="UER00616"/>
</dbReference>
<dbReference type="Proteomes" id="UP000001195">
    <property type="component" value="Chromosome"/>
</dbReference>
<dbReference type="GO" id="GO:0005886">
    <property type="term" value="C:plasma membrane"/>
    <property type="evidence" value="ECO:0007669"/>
    <property type="project" value="UniProtKB-SubCell"/>
</dbReference>
<dbReference type="GO" id="GO:0004609">
    <property type="term" value="F:phosphatidylserine decarboxylase activity"/>
    <property type="evidence" value="ECO:0007669"/>
    <property type="project" value="UniProtKB-UniRule"/>
</dbReference>
<dbReference type="GO" id="GO:0006646">
    <property type="term" value="P:phosphatidylethanolamine biosynthetic process"/>
    <property type="evidence" value="ECO:0007669"/>
    <property type="project" value="UniProtKB-UniRule"/>
</dbReference>
<dbReference type="HAMAP" id="MF_00663">
    <property type="entry name" value="PS_decarb_PSD_B_type2"/>
    <property type="match status" value="1"/>
</dbReference>
<dbReference type="InterPro" id="IPR003817">
    <property type="entry name" value="PS_Dcarbxylase"/>
</dbReference>
<dbReference type="InterPro" id="IPR033177">
    <property type="entry name" value="PSD-B"/>
</dbReference>
<dbReference type="InterPro" id="IPR033179">
    <property type="entry name" value="PSD_type2_pro"/>
</dbReference>
<dbReference type="NCBIfam" id="NF001941">
    <property type="entry name" value="PRK00723.1"/>
    <property type="match status" value="1"/>
</dbReference>
<dbReference type="NCBIfam" id="TIGR00163">
    <property type="entry name" value="PS_decarb"/>
    <property type="match status" value="1"/>
</dbReference>
<dbReference type="PANTHER" id="PTHR10067">
    <property type="entry name" value="PHOSPHATIDYLSERINE DECARBOXYLASE"/>
    <property type="match status" value="1"/>
</dbReference>
<dbReference type="PANTHER" id="PTHR10067:SF17">
    <property type="entry name" value="PHOSPHATIDYLSERINE DECARBOXYLASE PROENZYME 2"/>
    <property type="match status" value="1"/>
</dbReference>
<dbReference type="Pfam" id="PF02666">
    <property type="entry name" value="PS_Dcarbxylase"/>
    <property type="match status" value="1"/>
</dbReference>
<comment type="function">
    <text evidence="1">Catalyzes the formation of phosphatidylethanolamine (PtdEtn) from phosphatidylserine (PtdSer).</text>
</comment>
<comment type="catalytic activity">
    <reaction evidence="1">
        <text>a 1,2-diacyl-sn-glycero-3-phospho-L-serine + H(+) = a 1,2-diacyl-sn-glycero-3-phosphoethanolamine + CO2</text>
        <dbReference type="Rhea" id="RHEA:20828"/>
        <dbReference type="ChEBI" id="CHEBI:15378"/>
        <dbReference type="ChEBI" id="CHEBI:16526"/>
        <dbReference type="ChEBI" id="CHEBI:57262"/>
        <dbReference type="ChEBI" id="CHEBI:64612"/>
        <dbReference type="EC" id="4.1.1.65"/>
    </reaction>
</comment>
<comment type="cofactor">
    <cofactor evidence="1">
        <name>pyruvate</name>
        <dbReference type="ChEBI" id="CHEBI:15361"/>
    </cofactor>
    <text evidence="1">Binds 1 pyruvoyl group covalently per subunit.</text>
</comment>
<comment type="pathway">
    <text evidence="1">Phospholipid metabolism; phosphatidylethanolamine biosynthesis; phosphatidylethanolamine from CDP-diacylglycerol: step 2/2.</text>
</comment>
<comment type="subunit">
    <text evidence="1">Heterodimer of a large membrane-associated beta subunit and a small pyruvoyl-containing alpha subunit.</text>
</comment>
<comment type="subcellular location">
    <subcellularLocation>
        <location evidence="1">Cell membrane</location>
        <topology evidence="1">Peripheral membrane protein</topology>
    </subcellularLocation>
</comment>
<comment type="PTM">
    <text evidence="1">Is synthesized initially as an inactive proenzyme. Formation of the active enzyme involves a self-maturation process in which the active site pyruvoyl group is generated from an internal serine residue via an autocatalytic post-translational modification. Two non-identical subunits are generated from the proenzyme in this reaction, and the pyruvate is formed at the N-terminus of the alpha chain, which is derived from the carboxyl end of the proenzyme. The autoendoproteolytic cleavage occurs by a canonical serine protease mechanism, in which the side chain hydroxyl group of the serine supplies its oxygen atom to form the C-terminus of the beta chain, while the remainder of the serine residue undergoes an oxidative deamination to produce ammonia and the pyruvoyl prosthetic group on the alpha chain. During this reaction, the Ser that is part of the protease active site of the proenzyme becomes the pyruvoyl prosthetic group, which constitutes an essential element of the active site of the mature decarboxylase.</text>
</comment>
<comment type="similarity">
    <text evidence="1">Belongs to the phosphatidylserine decarboxylase family. PSD-B subfamily. Prokaryotic type II sub-subfamily.</text>
</comment>
<gene>
    <name evidence="1" type="primary">psd</name>
    <name type="ordered locus">CLL_A0050</name>
</gene>
<keyword id="KW-1003">Cell membrane</keyword>
<keyword id="KW-0210">Decarboxylase</keyword>
<keyword id="KW-0444">Lipid biosynthesis</keyword>
<keyword id="KW-0443">Lipid metabolism</keyword>
<keyword id="KW-0456">Lyase</keyword>
<keyword id="KW-0472">Membrane</keyword>
<keyword id="KW-0594">Phospholipid biosynthesis</keyword>
<keyword id="KW-1208">Phospholipid metabolism</keyword>
<keyword id="KW-0670">Pyruvate</keyword>
<keyword id="KW-0865">Zymogen</keyword>
<sequence length="296" mass="34097">MIKVYNRITNEYEEENVAGKKFIKWTYETPVGKSITELIAKRKIFSKFYGKFCDTKCSAKKIPDFVRDFNIDMNIAEKNISEFNSFNDFFVRNLTSTSRPIDYNEDIFISPGDGRITVYDNIDLDNIVQVKGLTYSLRELIKNDEISERYKDGICIILRLCPTDYHRFHFVDSGIPCETHKIKGHYYSVNPIALNSIPKLFCENKREWCIFKSENFGDVLTVEVGATCVGSIIQTYEPNKKAKKGDEKGYFKFGGSTTILFLEKDKVKIDDDILEQSKQGYECKVLLGETIGTKVL</sequence>
<evidence type="ECO:0000255" key="1">
    <source>
        <dbReference type="HAMAP-Rule" id="MF_00663"/>
    </source>
</evidence>
<organism>
    <name type="scientific">Clostridium botulinum (strain Eklund 17B / Type B)</name>
    <dbReference type="NCBI Taxonomy" id="935198"/>
    <lineage>
        <taxon>Bacteria</taxon>
        <taxon>Bacillati</taxon>
        <taxon>Bacillota</taxon>
        <taxon>Clostridia</taxon>
        <taxon>Eubacteriales</taxon>
        <taxon>Clostridiaceae</taxon>
        <taxon>Clostridium</taxon>
    </lineage>
</organism>
<proteinExistence type="inferred from homology"/>
<feature type="chain" id="PRO_1000131434" description="Phosphatidylserine decarboxylase beta chain" evidence="1">
    <location>
        <begin position="1"/>
        <end position="255"/>
    </location>
</feature>
<feature type="chain" id="PRO_1000131435" description="Phosphatidylserine decarboxylase alpha chain" evidence="1">
    <location>
        <begin position="256"/>
        <end position="296"/>
    </location>
</feature>
<feature type="active site" description="Charge relay system; for autoendoproteolytic cleavage activity" evidence="1">
    <location>
        <position position="113"/>
    </location>
</feature>
<feature type="active site" description="Charge relay system; for autoendoproteolytic cleavage activity" evidence="1">
    <location>
        <position position="169"/>
    </location>
</feature>
<feature type="active site" description="Charge relay system; for autoendoproteolytic cleavage activity" evidence="1">
    <location>
        <position position="256"/>
    </location>
</feature>
<feature type="active site" description="Schiff-base intermediate with substrate; via pyruvic acid; for decarboxylase activity" evidence="1">
    <location>
        <position position="256"/>
    </location>
</feature>
<feature type="site" description="Cleavage (non-hydrolytic); by autocatalysis" evidence="1">
    <location>
        <begin position="255"/>
        <end position="256"/>
    </location>
</feature>
<feature type="modified residue" description="Pyruvic acid (Ser); by autocatalysis" evidence="1">
    <location>
        <position position="256"/>
    </location>
</feature>
<name>PSD_CLOBB</name>
<protein>
    <recommendedName>
        <fullName evidence="1">Phosphatidylserine decarboxylase proenzyme</fullName>
        <ecNumber evidence="1">4.1.1.65</ecNumber>
    </recommendedName>
    <component>
        <recommendedName>
            <fullName evidence="1">Phosphatidylserine decarboxylase alpha chain</fullName>
        </recommendedName>
    </component>
    <component>
        <recommendedName>
            <fullName evidence="1">Phosphatidylserine decarboxylase beta chain</fullName>
        </recommendedName>
    </component>
</protein>
<reference key="1">
    <citation type="submission" date="2008-04" db="EMBL/GenBank/DDBJ databases">
        <title>Complete sequence of Clostridium botulinum strain Eklund.</title>
        <authorList>
            <person name="Brinkac L.M."/>
            <person name="Brown J.L."/>
            <person name="Bruce D."/>
            <person name="Detter C."/>
            <person name="Munk C."/>
            <person name="Smith L.A."/>
            <person name="Smith T.J."/>
            <person name="Sutton G."/>
            <person name="Brettin T.S."/>
        </authorList>
    </citation>
    <scope>NUCLEOTIDE SEQUENCE [LARGE SCALE GENOMIC DNA]</scope>
    <source>
        <strain>Eklund 17B / Type B</strain>
    </source>
</reference>
<accession>B2THF2</accession>